<sequence length="285" mass="27835">MFFESRPIVGVGGGGGACGGLLTCVGRDAEGKGGADTLGREILELFLWWLLCAGLTEGICGLFCGTFGAEAPDNGSGGAGDDGTMGIGGAAEDGISGIGGAEDEGILGTAGAGDNGALGMGGAATDGTAPGIGGALADGEGLVLALLLICFNFGIPPAKISPNCGAPIPGIGGADIEGPLLLTVPELPEADETTPPPTIGALLSLVSAFFSFIPFLMSPNRASRPCITDFAGLGALPPNAGGGGGGGGAGAPAISTIRYIYGRLLQQTVVRFLVVCFVSYQKLSS</sequence>
<proteinExistence type="uncertain"/>
<evidence type="ECO:0000255" key="1"/>
<evidence type="ECO:0000269" key="2">
    <source>
    </source>
</evidence>
<evidence type="ECO:0000305" key="3"/>
<evidence type="ECO:0000305" key="4">
    <source>
    </source>
</evidence>
<comment type="subcellular location">
    <subcellularLocation>
        <location evidence="3">Membrane</location>
        <topology evidence="3">Single-pass membrane protein</topology>
    </subcellularLocation>
</comment>
<comment type="disruption phenotype">
    <text evidence="2">Leads to overproduction and excretion of inositol into the growth medium.</text>
</comment>
<comment type="miscellaneous">
    <text evidence="3">Partially overlaps VRP1. Disruption phenotypes caused by deletion of this gene may also be a result of a defect in its overlapping gene.</text>
</comment>
<comment type="caution">
    <text evidence="4">Product of a dubious gene prediction unlikely to encode a functional protein. Because of that it is not part of the S.cerevisiae S288c complete/reference proteome set.</text>
</comment>
<organism>
    <name type="scientific">Saccharomyces cerevisiae (strain ATCC 204508 / S288c)</name>
    <name type="common">Baker's yeast</name>
    <dbReference type="NCBI Taxonomy" id="559292"/>
    <lineage>
        <taxon>Eukaryota</taxon>
        <taxon>Fungi</taxon>
        <taxon>Dikarya</taxon>
        <taxon>Ascomycota</taxon>
        <taxon>Saccharomycotina</taxon>
        <taxon>Saccharomycetes</taxon>
        <taxon>Saccharomycetales</taxon>
        <taxon>Saccharomycetaceae</taxon>
        <taxon>Saccharomyces</taxon>
    </lineage>
</organism>
<gene>
    <name type="primary">OPI9</name>
    <name type="ordered locus">YLR338W</name>
</gene>
<reference key="1">
    <citation type="journal article" date="1997" name="Nature">
        <title>The nucleotide sequence of Saccharomyces cerevisiae chromosome XII.</title>
        <authorList>
            <person name="Johnston M."/>
            <person name="Hillier L.W."/>
            <person name="Riles L."/>
            <person name="Albermann K."/>
            <person name="Andre B."/>
            <person name="Ansorge W."/>
            <person name="Benes V."/>
            <person name="Brueckner M."/>
            <person name="Delius H."/>
            <person name="Dubois E."/>
            <person name="Duesterhoeft A."/>
            <person name="Entian K.-D."/>
            <person name="Floeth M."/>
            <person name="Goffeau A."/>
            <person name="Hebling U."/>
            <person name="Heumann K."/>
            <person name="Heuss-Neitzel D."/>
            <person name="Hilbert H."/>
            <person name="Hilger F."/>
            <person name="Kleine K."/>
            <person name="Koetter P."/>
            <person name="Louis E.J."/>
            <person name="Messenguy F."/>
            <person name="Mewes H.-W."/>
            <person name="Miosga T."/>
            <person name="Moestl D."/>
            <person name="Mueller-Auer S."/>
            <person name="Nentwich U."/>
            <person name="Obermaier B."/>
            <person name="Piravandi E."/>
            <person name="Pohl T.M."/>
            <person name="Portetelle D."/>
            <person name="Purnelle B."/>
            <person name="Rechmann S."/>
            <person name="Rieger M."/>
            <person name="Rinke M."/>
            <person name="Rose M."/>
            <person name="Scharfe M."/>
            <person name="Scherens B."/>
            <person name="Scholler P."/>
            <person name="Schwager C."/>
            <person name="Schwarz S."/>
            <person name="Underwood A.P."/>
            <person name="Urrestarazu L.A."/>
            <person name="Vandenbol M."/>
            <person name="Verhasselt P."/>
            <person name="Vierendeels F."/>
            <person name="Voet M."/>
            <person name="Volckaert G."/>
            <person name="Voss H."/>
            <person name="Wambutt R."/>
            <person name="Wedler E."/>
            <person name="Wedler H."/>
            <person name="Zimmermann F.K."/>
            <person name="Zollner A."/>
            <person name="Hani J."/>
            <person name="Hoheisel J.D."/>
        </authorList>
    </citation>
    <scope>NUCLEOTIDE SEQUENCE [LARGE SCALE GENOMIC DNA]</scope>
    <source>
        <strain>ATCC 204508 / S288c</strain>
    </source>
</reference>
<reference key="2">
    <citation type="journal article" date="2014" name="G3 (Bethesda)">
        <title>The reference genome sequence of Saccharomyces cerevisiae: Then and now.</title>
        <authorList>
            <person name="Engel S.R."/>
            <person name="Dietrich F.S."/>
            <person name="Fisk D.G."/>
            <person name="Binkley G."/>
            <person name="Balakrishnan R."/>
            <person name="Costanzo M.C."/>
            <person name="Dwight S.S."/>
            <person name="Hitz B.C."/>
            <person name="Karra K."/>
            <person name="Nash R.S."/>
            <person name="Weng S."/>
            <person name="Wong E.D."/>
            <person name="Lloyd P."/>
            <person name="Skrzypek M.S."/>
            <person name="Miyasato S.R."/>
            <person name="Simison M."/>
            <person name="Cherry J.M."/>
        </authorList>
    </citation>
    <scope>GENOME REANNOTATION</scope>
    <source>
        <strain>ATCC 204508 / S288c</strain>
    </source>
</reference>
<reference key="3">
    <citation type="journal article" date="2006" name="Genetics">
        <title>Genomic analysis of the Opi- phenotype.</title>
        <authorList>
            <person name="Hancock L.C."/>
            <person name="Behta R.P."/>
            <person name="Lopes J.M."/>
        </authorList>
    </citation>
    <scope>DISRUPTION PHENOTYPE</scope>
</reference>
<feature type="chain" id="PRO_0000299778" description="Putative uncharacterized protein OPI9">
    <location>
        <begin position="1"/>
        <end position="285"/>
    </location>
</feature>
<feature type="transmembrane region" description="Helical" evidence="1">
    <location>
        <begin position="197"/>
        <end position="217"/>
    </location>
</feature>
<name>OPI9_YEAST</name>
<accession>O94084</accession>
<dbReference type="EMBL" id="U19028">
    <property type="protein sequence ID" value="AAB67267.1"/>
    <property type="molecule type" value="Genomic_DNA"/>
</dbReference>
<dbReference type="PIR" id="S69312">
    <property type="entry name" value="S69312"/>
</dbReference>
<dbReference type="DIP" id="DIP-4674N"/>
<dbReference type="MINT" id="O94084"/>
<dbReference type="STRING" id="4932.YLR338W"/>
<dbReference type="iPTMnet" id="O94084"/>
<dbReference type="PaxDb" id="4932-YLR338W"/>
<dbReference type="EnsemblFungi" id="YLR338W_mRNA">
    <property type="protein sequence ID" value="YLR338W"/>
    <property type="gene ID" value="YLR338W"/>
</dbReference>
<dbReference type="AGR" id="SGD:S000004330"/>
<dbReference type="SGD" id="S000004330">
    <property type="gene designation" value="OPI9"/>
</dbReference>
<dbReference type="eggNOG" id="ENOG502S976">
    <property type="taxonomic scope" value="Eukaryota"/>
</dbReference>
<dbReference type="HOGENOM" id="CLU_977301_0_0_1"/>
<dbReference type="GO" id="GO:0016020">
    <property type="term" value="C:membrane"/>
    <property type="evidence" value="ECO:0007669"/>
    <property type="project" value="UniProtKB-SubCell"/>
</dbReference>
<protein>
    <recommendedName>
        <fullName>Putative uncharacterized protein OPI9</fullName>
    </recommendedName>
</protein>
<keyword id="KW-0472">Membrane</keyword>
<keyword id="KW-0812">Transmembrane</keyword>
<keyword id="KW-1133">Transmembrane helix</keyword>